<protein>
    <recommendedName>
        <fullName evidence="1">Probable tRNA pseudouridine synthase B</fullName>
        <ecNumber evidence="1">5.4.99.25</ecNumber>
    </recommendedName>
    <alternativeName>
        <fullName evidence="1">tRNA pseudouridine(55) synthase</fullName>
        <shortName evidence="1">Psi55 synthase</shortName>
    </alternativeName>
    <alternativeName>
        <fullName evidence="1">tRNA pseudouridylate synthase</fullName>
    </alternativeName>
    <alternativeName>
        <fullName evidence="1">tRNA-uridine isomerase</fullName>
    </alternativeName>
</protein>
<proteinExistence type="inferred from homology"/>
<name>TRUB_METTH</name>
<dbReference type="EC" id="5.4.99.25" evidence="1"/>
<dbReference type="EMBL" id="AE000666">
    <property type="protein sequence ID" value="AAB84541.1"/>
    <property type="molecule type" value="Genomic_DNA"/>
</dbReference>
<dbReference type="PIR" id="A69141">
    <property type="entry name" value="A69141"/>
</dbReference>
<dbReference type="SMR" id="O26140"/>
<dbReference type="FunCoup" id="O26140">
    <property type="interactions" value="192"/>
</dbReference>
<dbReference type="STRING" id="187420.MTH_32"/>
<dbReference type="PaxDb" id="187420-MTH_32"/>
<dbReference type="EnsemblBacteria" id="AAB84541">
    <property type="protein sequence ID" value="AAB84541"/>
    <property type="gene ID" value="MTH_32"/>
</dbReference>
<dbReference type="KEGG" id="mth:MTH_32"/>
<dbReference type="PATRIC" id="fig|187420.15.peg.32"/>
<dbReference type="HOGENOM" id="CLU_032087_3_0_2"/>
<dbReference type="InParanoid" id="O26140"/>
<dbReference type="Proteomes" id="UP000005223">
    <property type="component" value="Chromosome"/>
</dbReference>
<dbReference type="GO" id="GO:0003723">
    <property type="term" value="F:RNA binding"/>
    <property type="evidence" value="ECO:0007669"/>
    <property type="project" value="InterPro"/>
</dbReference>
<dbReference type="GO" id="GO:0160148">
    <property type="term" value="F:tRNA pseudouridine(55) synthase activity"/>
    <property type="evidence" value="ECO:0007669"/>
    <property type="project" value="UniProtKB-EC"/>
</dbReference>
<dbReference type="GO" id="GO:0000495">
    <property type="term" value="P:box H/ACA sno(s)RNA 3'-end processing"/>
    <property type="evidence" value="ECO:0007669"/>
    <property type="project" value="TreeGrafter"/>
</dbReference>
<dbReference type="GO" id="GO:1990481">
    <property type="term" value="P:mRNA pseudouridine synthesis"/>
    <property type="evidence" value="ECO:0007669"/>
    <property type="project" value="TreeGrafter"/>
</dbReference>
<dbReference type="GO" id="GO:0031118">
    <property type="term" value="P:rRNA pseudouridine synthesis"/>
    <property type="evidence" value="ECO:0007669"/>
    <property type="project" value="TreeGrafter"/>
</dbReference>
<dbReference type="GO" id="GO:0031120">
    <property type="term" value="P:snRNA pseudouridine synthesis"/>
    <property type="evidence" value="ECO:0007669"/>
    <property type="project" value="TreeGrafter"/>
</dbReference>
<dbReference type="GO" id="GO:0031119">
    <property type="term" value="P:tRNA pseudouridine synthesis"/>
    <property type="evidence" value="ECO:0007669"/>
    <property type="project" value="UniProtKB-UniRule"/>
</dbReference>
<dbReference type="CDD" id="cd02572">
    <property type="entry name" value="PseudoU_synth_hDyskerin"/>
    <property type="match status" value="1"/>
</dbReference>
<dbReference type="CDD" id="cd21148">
    <property type="entry name" value="PUA_Cbf5"/>
    <property type="match status" value="1"/>
</dbReference>
<dbReference type="FunFam" id="3.30.2350.10:FF:000001">
    <property type="entry name" value="H/ACA ribonucleoprotein complex subunit CBF5"/>
    <property type="match status" value="1"/>
</dbReference>
<dbReference type="Gene3D" id="3.30.2350.10">
    <property type="entry name" value="Pseudouridine synthase"/>
    <property type="match status" value="1"/>
</dbReference>
<dbReference type="Gene3D" id="2.30.130.10">
    <property type="entry name" value="PUA domain"/>
    <property type="match status" value="1"/>
</dbReference>
<dbReference type="HAMAP" id="MF_01081">
    <property type="entry name" value="TruB_arch"/>
    <property type="match status" value="1"/>
</dbReference>
<dbReference type="InterPro" id="IPR012960">
    <property type="entry name" value="Dyskerin-like"/>
</dbReference>
<dbReference type="InterPro" id="IPR020103">
    <property type="entry name" value="PsdUridine_synth_cat_dom_sf"/>
</dbReference>
<dbReference type="InterPro" id="IPR002501">
    <property type="entry name" value="PsdUridine_synth_N"/>
</dbReference>
<dbReference type="InterPro" id="IPR002478">
    <property type="entry name" value="PUA"/>
</dbReference>
<dbReference type="InterPro" id="IPR015947">
    <property type="entry name" value="PUA-like_sf"/>
</dbReference>
<dbReference type="InterPro" id="IPR036974">
    <property type="entry name" value="PUA_sf"/>
</dbReference>
<dbReference type="InterPro" id="IPR004802">
    <property type="entry name" value="tRNA_PsdUridine_synth_B_fam"/>
</dbReference>
<dbReference type="InterPro" id="IPR026326">
    <property type="entry name" value="TruB_arch"/>
</dbReference>
<dbReference type="InterPro" id="IPR032819">
    <property type="entry name" value="TruB_C"/>
</dbReference>
<dbReference type="NCBIfam" id="TIGR00425">
    <property type="entry name" value="CBF5"/>
    <property type="match status" value="1"/>
</dbReference>
<dbReference type="NCBIfam" id="NF003280">
    <property type="entry name" value="PRK04270.1"/>
    <property type="match status" value="1"/>
</dbReference>
<dbReference type="PANTHER" id="PTHR23127">
    <property type="entry name" value="CENTROMERE/MICROTUBULE BINDING PROTEIN CBF5"/>
    <property type="match status" value="1"/>
</dbReference>
<dbReference type="PANTHER" id="PTHR23127:SF0">
    <property type="entry name" value="H_ACA RIBONUCLEOPROTEIN COMPLEX SUBUNIT DKC1"/>
    <property type="match status" value="1"/>
</dbReference>
<dbReference type="Pfam" id="PF08068">
    <property type="entry name" value="DKCLD"/>
    <property type="match status" value="1"/>
</dbReference>
<dbReference type="Pfam" id="PF01472">
    <property type="entry name" value="PUA"/>
    <property type="match status" value="1"/>
</dbReference>
<dbReference type="Pfam" id="PF16198">
    <property type="entry name" value="TruB_C_2"/>
    <property type="match status" value="1"/>
</dbReference>
<dbReference type="Pfam" id="PF01509">
    <property type="entry name" value="TruB_N"/>
    <property type="match status" value="1"/>
</dbReference>
<dbReference type="SMART" id="SM01136">
    <property type="entry name" value="DKCLD"/>
    <property type="match status" value="1"/>
</dbReference>
<dbReference type="SMART" id="SM00359">
    <property type="entry name" value="PUA"/>
    <property type="match status" value="1"/>
</dbReference>
<dbReference type="SUPFAM" id="SSF55120">
    <property type="entry name" value="Pseudouridine synthase"/>
    <property type="match status" value="1"/>
</dbReference>
<dbReference type="SUPFAM" id="SSF88697">
    <property type="entry name" value="PUA domain-like"/>
    <property type="match status" value="1"/>
</dbReference>
<dbReference type="PROSITE" id="PS50890">
    <property type="entry name" value="PUA"/>
    <property type="match status" value="1"/>
</dbReference>
<gene>
    <name evidence="1" type="primary">truB</name>
    <name type="ordered locus">MTH_32</name>
</gene>
<accession>O26140</accession>
<organism>
    <name type="scientific">Methanothermobacter thermautotrophicus (strain ATCC 29096 / DSM 1053 / JCM 10044 / NBRC 100330 / Delta H)</name>
    <name type="common">Methanobacterium thermoautotrophicum</name>
    <dbReference type="NCBI Taxonomy" id="187420"/>
    <lineage>
        <taxon>Archaea</taxon>
        <taxon>Methanobacteriati</taxon>
        <taxon>Methanobacteriota</taxon>
        <taxon>Methanomada group</taxon>
        <taxon>Methanobacteria</taxon>
        <taxon>Methanobacteriales</taxon>
        <taxon>Methanobacteriaceae</taxon>
        <taxon>Methanothermobacter</taxon>
    </lineage>
</organism>
<comment type="function">
    <text evidence="1">Could be responsible for synthesis of pseudouridine from uracil-55 in the psi GC loop of transfer RNAs.</text>
</comment>
<comment type="catalytic activity">
    <reaction evidence="1">
        <text>uridine(55) in tRNA = pseudouridine(55) in tRNA</text>
        <dbReference type="Rhea" id="RHEA:42532"/>
        <dbReference type="Rhea" id="RHEA-COMP:10101"/>
        <dbReference type="Rhea" id="RHEA-COMP:10102"/>
        <dbReference type="ChEBI" id="CHEBI:65314"/>
        <dbReference type="ChEBI" id="CHEBI:65315"/>
        <dbReference type="EC" id="5.4.99.25"/>
    </reaction>
</comment>
<comment type="similarity">
    <text evidence="1">Belongs to the pseudouridine synthase TruB family. Type 2 subfamily.</text>
</comment>
<evidence type="ECO:0000255" key="1">
    <source>
        <dbReference type="HAMAP-Rule" id="MF_01081"/>
    </source>
</evidence>
<reference key="1">
    <citation type="journal article" date="1997" name="J. Bacteriol.">
        <title>Complete genome sequence of Methanobacterium thermoautotrophicum deltaH: functional analysis and comparative genomics.</title>
        <authorList>
            <person name="Smith D.R."/>
            <person name="Doucette-Stamm L.A."/>
            <person name="Deloughery C."/>
            <person name="Lee H.-M."/>
            <person name="Dubois J."/>
            <person name="Aldredge T."/>
            <person name="Bashirzadeh R."/>
            <person name="Blakely D."/>
            <person name="Cook R."/>
            <person name="Gilbert K."/>
            <person name="Harrison D."/>
            <person name="Hoang L."/>
            <person name="Keagle P."/>
            <person name="Lumm W."/>
            <person name="Pothier B."/>
            <person name="Qiu D."/>
            <person name="Spadafora R."/>
            <person name="Vicare R."/>
            <person name="Wang Y."/>
            <person name="Wierzbowski J."/>
            <person name="Gibson R."/>
            <person name="Jiwani N."/>
            <person name="Caruso A."/>
            <person name="Bush D."/>
            <person name="Safer H."/>
            <person name="Patwell D."/>
            <person name="Prabhakar S."/>
            <person name="McDougall S."/>
            <person name="Shimer G."/>
            <person name="Goyal A."/>
            <person name="Pietrovski S."/>
            <person name="Church G.M."/>
            <person name="Daniels C.J."/>
            <person name="Mao J.-I."/>
            <person name="Rice P."/>
            <person name="Noelling J."/>
            <person name="Reeve J.N."/>
        </authorList>
    </citation>
    <scope>NUCLEOTIDE SEQUENCE [LARGE SCALE GENOMIC DNA]</scope>
    <source>
        <strain>ATCC 29096 / DSM 1053 / JCM 10044 / NBRC 100330 / Delta H</strain>
    </source>
</reference>
<sequence>MQVSLMANFIELKEATTNPDYGCPPAERDIEAHISMGVVNLDKPSGPTSHQVDSWVRDMLHVEKVGHGGTLDPKVTGVLPLGIDRATRVMQLLLEAPKEYVCLMRVHREVDEERIREVLGEFQGKIFQIPPLKSAVKRDLRVRTIYRVDILEVDGQDVLFRIACEAGTYVRKYCHDVGEALGAGAHMAELRRTAVGPFTEEGLVTLHDLKDAYQFWVEDGDETFLRECILPMEFAVGHLPRVVILDSAVDAICHGADLARGGIAGLDDNIAWGDTVAIMTLKGELVGVGEASMSALDIAAADGGLVIETRKVFMEPGTYPRMWR</sequence>
<feature type="chain" id="PRO_0000121963" description="Probable tRNA pseudouridine synthase B">
    <location>
        <begin position="1"/>
        <end position="324"/>
    </location>
</feature>
<feature type="domain" description="PUA" evidence="1">
    <location>
        <begin position="239"/>
        <end position="314"/>
    </location>
</feature>
<feature type="active site" description="Nucleophile" evidence="1">
    <location>
        <position position="72"/>
    </location>
</feature>
<keyword id="KW-0413">Isomerase</keyword>
<keyword id="KW-1185">Reference proteome</keyword>
<keyword id="KW-0819">tRNA processing</keyword>